<name>PURA_BLOPB</name>
<dbReference type="EC" id="6.3.4.4" evidence="1"/>
<dbReference type="EMBL" id="CP000016">
    <property type="protein sequence ID" value="AAZ40729.1"/>
    <property type="molecule type" value="Genomic_DNA"/>
</dbReference>
<dbReference type="RefSeq" id="WP_011282635.1">
    <property type="nucleotide sequence ID" value="NC_007292.1"/>
</dbReference>
<dbReference type="SMR" id="Q494F3"/>
<dbReference type="STRING" id="291272.BPEN_086"/>
<dbReference type="KEGG" id="bpn:BPEN_086"/>
<dbReference type="eggNOG" id="COG0104">
    <property type="taxonomic scope" value="Bacteria"/>
</dbReference>
<dbReference type="HOGENOM" id="CLU_029848_0_0_6"/>
<dbReference type="OrthoDB" id="9807553at2"/>
<dbReference type="UniPathway" id="UPA00075">
    <property type="reaction ID" value="UER00335"/>
</dbReference>
<dbReference type="Proteomes" id="UP000007794">
    <property type="component" value="Chromosome"/>
</dbReference>
<dbReference type="GO" id="GO:0005737">
    <property type="term" value="C:cytoplasm"/>
    <property type="evidence" value="ECO:0007669"/>
    <property type="project" value="UniProtKB-SubCell"/>
</dbReference>
<dbReference type="GO" id="GO:0004019">
    <property type="term" value="F:adenylosuccinate synthase activity"/>
    <property type="evidence" value="ECO:0007669"/>
    <property type="project" value="UniProtKB-UniRule"/>
</dbReference>
<dbReference type="GO" id="GO:0005525">
    <property type="term" value="F:GTP binding"/>
    <property type="evidence" value="ECO:0007669"/>
    <property type="project" value="UniProtKB-UniRule"/>
</dbReference>
<dbReference type="GO" id="GO:0000287">
    <property type="term" value="F:magnesium ion binding"/>
    <property type="evidence" value="ECO:0007669"/>
    <property type="project" value="UniProtKB-UniRule"/>
</dbReference>
<dbReference type="GO" id="GO:0044208">
    <property type="term" value="P:'de novo' AMP biosynthetic process"/>
    <property type="evidence" value="ECO:0007669"/>
    <property type="project" value="UniProtKB-UniRule"/>
</dbReference>
<dbReference type="GO" id="GO:0046040">
    <property type="term" value="P:IMP metabolic process"/>
    <property type="evidence" value="ECO:0007669"/>
    <property type="project" value="TreeGrafter"/>
</dbReference>
<dbReference type="CDD" id="cd03108">
    <property type="entry name" value="AdSS"/>
    <property type="match status" value="1"/>
</dbReference>
<dbReference type="FunFam" id="1.10.300.10:FF:000001">
    <property type="entry name" value="Adenylosuccinate synthetase"/>
    <property type="match status" value="1"/>
</dbReference>
<dbReference type="FunFam" id="3.90.170.10:FF:000001">
    <property type="entry name" value="Adenylosuccinate synthetase"/>
    <property type="match status" value="1"/>
</dbReference>
<dbReference type="Gene3D" id="3.40.440.10">
    <property type="entry name" value="Adenylosuccinate Synthetase, subunit A, domain 1"/>
    <property type="match status" value="1"/>
</dbReference>
<dbReference type="Gene3D" id="1.10.300.10">
    <property type="entry name" value="Adenylosuccinate Synthetase, subunit A, domain 2"/>
    <property type="match status" value="1"/>
</dbReference>
<dbReference type="Gene3D" id="3.90.170.10">
    <property type="entry name" value="Adenylosuccinate Synthetase, subunit A, domain 3"/>
    <property type="match status" value="1"/>
</dbReference>
<dbReference type="HAMAP" id="MF_00011">
    <property type="entry name" value="Adenylosucc_synth"/>
    <property type="match status" value="1"/>
</dbReference>
<dbReference type="InterPro" id="IPR018220">
    <property type="entry name" value="Adenylosuccin_syn_GTP-bd"/>
</dbReference>
<dbReference type="InterPro" id="IPR033128">
    <property type="entry name" value="Adenylosuccin_syn_Lys_AS"/>
</dbReference>
<dbReference type="InterPro" id="IPR042109">
    <property type="entry name" value="Adenylosuccinate_synth_dom1"/>
</dbReference>
<dbReference type="InterPro" id="IPR042110">
    <property type="entry name" value="Adenylosuccinate_synth_dom2"/>
</dbReference>
<dbReference type="InterPro" id="IPR042111">
    <property type="entry name" value="Adenylosuccinate_synth_dom3"/>
</dbReference>
<dbReference type="InterPro" id="IPR001114">
    <property type="entry name" value="Adenylosuccinate_synthetase"/>
</dbReference>
<dbReference type="InterPro" id="IPR027417">
    <property type="entry name" value="P-loop_NTPase"/>
</dbReference>
<dbReference type="NCBIfam" id="NF002223">
    <property type="entry name" value="PRK01117.1"/>
    <property type="match status" value="1"/>
</dbReference>
<dbReference type="NCBIfam" id="TIGR00184">
    <property type="entry name" value="purA"/>
    <property type="match status" value="1"/>
</dbReference>
<dbReference type="PANTHER" id="PTHR11846">
    <property type="entry name" value="ADENYLOSUCCINATE SYNTHETASE"/>
    <property type="match status" value="1"/>
</dbReference>
<dbReference type="PANTHER" id="PTHR11846:SF0">
    <property type="entry name" value="ADENYLOSUCCINATE SYNTHETASE"/>
    <property type="match status" value="1"/>
</dbReference>
<dbReference type="Pfam" id="PF00709">
    <property type="entry name" value="Adenylsucc_synt"/>
    <property type="match status" value="1"/>
</dbReference>
<dbReference type="SMART" id="SM00788">
    <property type="entry name" value="Adenylsucc_synt"/>
    <property type="match status" value="1"/>
</dbReference>
<dbReference type="SUPFAM" id="SSF52540">
    <property type="entry name" value="P-loop containing nucleoside triphosphate hydrolases"/>
    <property type="match status" value="1"/>
</dbReference>
<dbReference type="PROSITE" id="PS01266">
    <property type="entry name" value="ADENYLOSUCCIN_SYN_1"/>
    <property type="match status" value="1"/>
</dbReference>
<dbReference type="PROSITE" id="PS00513">
    <property type="entry name" value="ADENYLOSUCCIN_SYN_2"/>
    <property type="match status" value="1"/>
</dbReference>
<feature type="chain" id="PRO_0000224260" description="Adenylosuccinate synthetase">
    <location>
        <begin position="1"/>
        <end position="432"/>
    </location>
</feature>
<feature type="active site" description="Proton acceptor" evidence="1">
    <location>
        <position position="14"/>
    </location>
</feature>
<feature type="active site" description="Proton donor" evidence="1">
    <location>
        <position position="42"/>
    </location>
</feature>
<feature type="binding site" evidence="1">
    <location>
        <begin position="13"/>
        <end position="19"/>
    </location>
    <ligand>
        <name>GTP</name>
        <dbReference type="ChEBI" id="CHEBI:37565"/>
    </ligand>
</feature>
<feature type="binding site" description="in other chain" evidence="1">
    <location>
        <begin position="14"/>
        <end position="17"/>
    </location>
    <ligand>
        <name>IMP</name>
        <dbReference type="ChEBI" id="CHEBI:58053"/>
        <note>ligand shared between dimeric partners</note>
    </ligand>
</feature>
<feature type="binding site" evidence="1">
    <location>
        <position position="14"/>
    </location>
    <ligand>
        <name>Mg(2+)</name>
        <dbReference type="ChEBI" id="CHEBI:18420"/>
    </ligand>
</feature>
<feature type="binding site" description="in other chain" evidence="1">
    <location>
        <begin position="39"/>
        <end position="42"/>
    </location>
    <ligand>
        <name>IMP</name>
        <dbReference type="ChEBI" id="CHEBI:58053"/>
        <note>ligand shared between dimeric partners</note>
    </ligand>
</feature>
<feature type="binding site" evidence="1">
    <location>
        <begin position="41"/>
        <end position="43"/>
    </location>
    <ligand>
        <name>GTP</name>
        <dbReference type="ChEBI" id="CHEBI:37565"/>
    </ligand>
</feature>
<feature type="binding site" evidence="1">
    <location>
        <position position="41"/>
    </location>
    <ligand>
        <name>Mg(2+)</name>
        <dbReference type="ChEBI" id="CHEBI:18420"/>
    </ligand>
</feature>
<feature type="binding site" description="in other chain" evidence="1">
    <location>
        <position position="130"/>
    </location>
    <ligand>
        <name>IMP</name>
        <dbReference type="ChEBI" id="CHEBI:58053"/>
        <note>ligand shared between dimeric partners</note>
    </ligand>
</feature>
<feature type="binding site" evidence="1">
    <location>
        <position position="144"/>
    </location>
    <ligand>
        <name>IMP</name>
        <dbReference type="ChEBI" id="CHEBI:58053"/>
        <note>ligand shared between dimeric partners</note>
    </ligand>
</feature>
<feature type="binding site" description="in other chain" evidence="1">
    <location>
        <position position="225"/>
    </location>
    <ligand>
        <name>IMP</name>
        <dbReference type="ChEBI" id="CHEBI:58053"/>
        <note>ligand shared between dimeric partners</note>
    </ligand>
</feature>
<feature type="binding site" description="in other chain" evidence="1">
    <location>
        <position position="240"/>
    </location>
    <ligand>
        <name>IMP</name>
        <dbReference type="ChEBI" id="CHEBI:58053"/>
        <note>ligand shared between dimeric partners</note>
    </ligand>
</feature>
<feature type="binding site" evidence="1">
    <location>
        <begin position="300"/>
        <end position="306"/>
    </location>
    <ligand>
        <name>substrate</name>
    </ligand>
</feature>
<feature type="binding site" description="in other chain" evidence="1">
    <location>
        <position position="304"/>
    </location>
    <ligand>
        <name>IMP</name>
        <dbReference type="ChEBI" id="CHEBI:58053"/>
        <note>ligand shared between dimeric partners</note>
    </ligand>
</feature>
<feature type="binding site" evidence="1">
    <location>
        <position position="306"/>
    </location>
    <ligand>
        <name>GTP</name>
        <dbReference type="ChEBI" id="CHEBI:37565"/>
    </ligand>
</feature>
<feature type="binding site" evidence="1">
    <location>
        <begin position="332"/>
        <end position="334"/>
    </location>
    <ligand>
        <name>GTP</name>
        <dbReference type="ChEBI" id="CHEBI:37565"/>
    </ligand>
</feature>
<feature type="binding site" evidence="1">
    <location>
        <begin position="415"/>
        <end position="417"/>
    </location>
    <ligand>
        <name>GTP</name>
        <dbReference type="ChEBI" id="CHEBI:37565"/>
    </ligand>
</feature>
<evidence type="ECO:0000255" key="1">
    <source>
        <dbReference type="HAMAP-Rule" id="MF_00011"/>
    </source>
</evidence>
<comment type="function">
    <text evidence="1">Plays an important role in the de novo pathway of purine nucleotide biosynthesis. Catalyzes the first committed step in the biosynthesis of AMP from IMP.</text>
</comment>
<comment type="catalytic activity">
    <reaction evidence="1">
        <text>IMP + L-aspartate + GTP = N(6)-(1,2-dicarboxyethyl)-AMP + GDP + phosphate + 2 H(+)</text>
        <dbReference type="Rhea" id="RHEA:15753"/>
        <dbReference type="ChEBI" id="CHEBI:15378"/>
        <dbReference type="ChEBI" id="CHEBI:29991"/>
        <dbReference type="ChEBI" id="CHEBI:37565"/>
        <dbReference type="ChEBI" id="CHEBI:43474"/>
        <dbReference type="ChEBI" id="CHEBI:57567"/>
        <dbReference type="ChEBI" id="CHEBI:58053"/>
        <dbReference type="ChEBI" id="CHEBI:58189"/>
        <dbReference type="EC" id="6.3.4.4"/>
    </reaction>
</comment>
<comment type="cofactor">
    <cofactor evidence="1">
        <name>Mg(2+)</name>
        <dbReference type="ChEBI" id="CHEBI:18420"/>
    </cofactor>
    <text evidence="1">Binds 1 Mg(2+) ion per subunit.</text>
</comment>
<comment type="pathway">
    <text evidence="1">Purine metabolism; AMP biosynthesis via de novo pathway; AMP from IMP: step 1/2.</text>
</comment>
<comment type="subunit">
    <text evidence="1">Homodimer.</text>
</comment>
<comment type="subcellular location">
    <subcellularLocation>
        <location evidence="1">Cytoplasm</location>
    </subcellularLocation>
</comment>
<comment type="similarity">
    <text evidence="1">Belongs to the adenylosuccinate synthetase family.</text>
</comment>
<gene>
    <name evidence="1" type="primary">purA</name>
    <name type="ordered locus">BPEN_086</name>
</gene>
<keyword id="KW-0963">Cytoplasm</keyword>
<keyword id="KW-0342">GTP-binding</keyword>
<keyword id="KW-0436">Ligase</keyword>
<keyword id="KW-0460">Magnesium</keyword>
<keyword id="KW-0479">Metal-binding</keyword>
<keyword id="KW-0547">Nucleotide-binding</keyword>
<keyword id="KW-0658">Purine biosynthesis</keyword>
<keyword id="KW-1185">Reference proteome</keyword>
<proteinExistence type="inferred from homology"/>
<organism>
    <name type="scientific">Blochmanniella pennsylvanica (strain BPEN)</name>
    <dbReference type="NCBI Taxonomy" id="291272"/>
    <lineage>
        <taxon>Bacteria</taxon>
        <taxon>Pseudomonadati</taxon>
        <taxon>Pseudomonadota</taxon>
        <taxon>Gammaproteobacteria</taxon>
        <taxon>Enterobacterales</taxon>
        <taxon>Enterobacteriaceae</taxon>
        <taxon>ant endosymbionts</taxon>
        <taxon>Candidatus Blochmanniella</taxon>
    </lineage>
</organism>
<accession>Q494F3</accession>
<reference key="1">
    <citation type="journal article" date="2005" name="Genome Res.">
        <title>Genome sequence of Blochmannia pennsylvanicus indicates parallel evolutionary trends among bacterial mutualists of insects.</title>
        <authorList>
            <person name="Degnan P.H."/>
            <person name="Lazarus A.B."/>
            <person name="Wernegreen J.J."/>
        </authorList>
    </citation>
    <scope>NUCLEOTIDE SEQUENCE [LARGE SCALE GENOMIC DNA]</scope>
    <source>
        <strain>BPEN</strain>
    </source>
</reference>
<sequence>MARSIVVLGAQWGDEGKGKIVDWLTSRAQYVVRYQGGHNAGHTIVVDQQKITLHLIPSGILHNHVTAVIANGVVLSPFSLIKEMKMLLKLGVSTCKRIFISASCPLLLPYHVAMDLARENHHISKAIGTTGCGIGPSYEDKVARRALRVSDLYNLKYFKNKLKDVVDYYNFQLVYYYKTKPINYQIVLEEVMSISDILIDMVVDVPELLDDAAKRGDSVIFEGAQGSLLDIDHGTYPYVTSSHTIAGSVSVGAGVGLNYIDYVLGIVKAYSTRVGFGPFPTELSNDTGNWLCMNGNEFGSTTGRRRRTGWFDAVSVRYSVKINSFFSCCLTKIDVLDGLKELKICIAYRKKNGKVIHNFPCSLEELENCVPIYEILPGWMISTVGITEFHQLPKESQLYVKRIEELIGVPIHIVSTGSDRSAIIILRNPFDS</sequence>
<protein>
    <recommendedName>
        <fullName evidence="1">Adenylosuccinate synthetase</fullName>
        <shortName evidence="1">AMPSase</shortName>
        <shortName evidence="1">AdSS</shortName>
        <ecNumber evidence="1">6.3.4.4</ecNumber>
    </recommendedName>
    <alternativeName>
        <fullName evidence="1">IMP--aspartate ligase</fullName>
    </alternativeName>
</protein>